<protein>
    <recommendedName>
        <fullName evidence="1">Alanine--tRNA ligase</fullName>
        <ecNumber evidence="1">6.1.1.7</ecNumber>
    </recommendedName>
    <alternativeName>
        <fullName evidence="1">Alanyl-tRNA synthetase</fullName>
        <shortName evidence="1">AlaRS</shortName>
    </alternativeName>
</protein>
<name>SYA_RICPR</name>
<keyword id="KW-0030">Aminoacyl-tRNA synthetase</keyword>
<keyword id="KW-0067">ATP-binding</keyword>
<keyword id="KW-0963">Cytoplasm</keyword>
<keyword id="KW-0436">Ligase</keyword>
<keyword id="KW-0479">Metal-binding</keyword>
<keyword id="KW-0547">Nucleotide-binding</keyword>
<keyword id="KW-0648">Protein biosynthesis</keyword>
<keyword id="KW-1185">Reference proteome</keyword>
<keyword id="KW-0694">RNA-binding</keyword>
<keyword id="KW-0820">tRNA-binding</keyword>
<keyword id="KW-0862">Zinc</keyword>
<sequence>MTKFTTEEVRSKFITYFKANNHTHVPASSLIPDNDPSLMFVNSGMVQFKNVFTGQEKRSYNKAVTSQKSLRAGGKHNDLEHVGYTARHHTFFEMLGNFSFGDYFKEQAIYYTWDLLTKEFELPKDKLYVTIYHTDDPAASYWKKIAGLKDDRIIRIKTNDNFWSMGDTGPCGPCSEIFFDHGEEIYGGLPGTKDENCDRFIEIWNMVFMQYEQINKETRIELPKKSIDTGMGLERMTAVLQHVNNNYDIDLFQEIINFTENIVKIKVDGEAKFSYRVIADHLRASSFLIADGIIPSNEGRGYVLRRIMRRAMRHAHMLGAKEPLMYKLLPKLVDLMGNIYPELKIAESFISSILEQEEIRFKTTLERGLKLLTEETKTLTKGSKLSGEVAFKLYDTYGFPLDLTEDILKNRDITVDHKGFEELMLTQKERARKSWLGSGESKTDQLWFDIKEQYGSTEFLGYTLNEAECKIIALIKNNNLVDNIQEINTQFLLIANQTPFYGESGGQMGDIGMIFSQGSEIEVIDTFKYLRSIIVHKCILKKGKINIGENANLNINIRYRQNLRIHHSATHILHAVLHKILGKQVIQKGSLVTSTYLRFDINHSKAITNQEITLIEDQVNEIIRNNHEVTTTVMFTEDAIKQGAIALFGEKYDSEVRVVKIGETSLELCCGTHVKRTGDIGSFKIISESAIAAGVRRIEAVCGEFVIKLIRERDSLLKSIESSFKTNKNELITKVINILERNKELEKELEKAHLASLDLSIEQIKKQTKEITGIKLLYKEVGNINNKILRQAAENLTKKVENLIVVYIAHGVDKLSITVAVSKAITDKFNAGIIAKELSLFLGGSGGGGQASIAQAGGNDIINLTNINKKLWSLIVT</sequence>
<accession>Q9ZCA4</accession>
<organism>
    <name type="scientific">Rickettsia prowazekii (strain Madrid E)</name>
    <dbReference type="NCBI Taxonomy" id="272947"/>
    <lineage>
        <taxon>Bacteria</taxon>
        <taxon>Pseudomonadati</taxon>
        <taxon>Pseudomonadota</taxon>
        <taxon>Alphaproteobacteria</taxon>
        <taxon>Rickettsiales</taxon>
        <taxon>Rickettsiaceae</taxon>
        <taxon>Rickettsieae</taxon>
        <taxon>Rickettsia</taxon>
        <taxon>typhus group</taxon>
    </lineage>
</organism>
<gene>
    <name evidence="1" type="primary">alaS</name>
    <name type="ordered locus">RP856</name>
</gene>
<proteinExistence type="inferred from homology"/>
<evidence type="ECO:0000255" key="1">
    <source>
        <dbReference type="HAMAP-Rule" id="MF_00036"/>
    </source>
</evidence>
<comment type="function">
    <text evidence="1">Catalyzes the attachment of alanine to tRNA(Ala) in a two-step reaction: alanine is first activated by ATP to form Ala-AMP and then transferred to the acceptor end of tRNA(Ala). Also edits incorrectly charged Ser-tRNA(Ala) and Gly-tRNA(Ala) via its editing domain.</text>
</comment>
<comment type="catalytic activity">
    <reaction evidence="1">
        <text>tRNA(Ala) + L-alanine + ATP = L-alanyl-tRNA(Ala) + AMP + diphosphate</text>
        <dbReference type="Rhea" id="RHEA:12540"/>
        <dbReference type="Rhea" id="RHEA-COMP:9657"/>
        <dbReference type="Rhea" id="RHEA-COMP:9923"/>
        <dbReference type="ChEBI" id="CHEBI:30616"/>
        <dbReference type="ChEBI" id="CHEBI:33019"/>
        <dbReference type="ChEBI" id="CHEBI:57972"/>
        <dbReference type="ChEBI" id="CHEBI:78442"/>
        <dbReference type="ChEBI" id="CHEBI:78497"/>
        <dbReference type="ChEBI" id="CHEBI:456215"/>
        <dbReference type="EC" id="6.1.1.7"/>
    </reaction>
</comment>
<comment type="cofactor">
    <cofactor evidence="1">
        <name>Zn(2+)</name>
        <dbReference type="ChEBI" id="CHEBI:29105"/>
    </cofactor>
    <text evidence="1">Binds 1 zinc ion per subunit.</text>
</comment>
<comment type="subcellular location">
    <subcellularLocation>
        <location evidence="1">Cytoplasm</location>
    </subcellularLocation>
</comment>
<comment type="domain">
    <text evidence="1">Consists of three domains; the N-terminal catalytic domain, the editing domain and the C-terminal C-Ala domain. The editing domain removes incorrectly charged amino acids, while the C-Ala domain, along with tRNA(Ala), serves as a bridge to cooperatively bring together the editing and aminoacylation centers thus stimulating deacylation of misacylated tRNAs.</text>
</comment>
<comment type="similarity">
    <text evidence="1">Belongs to the class-II aminoacyl-tRNA synthetase family.</text>
</comment>
<dbReference type="EC" id="6.1.1.7" evidence="1"/>
<dbReference type="EMBL" id="AJ235273">
    <property type="protein sequence ID" value="CAA15280.1"/>
    <property type="molecule type" value="Genomic_DNA"/>
</dbReference>
<dbReference type="PIR" id="H71647">
    <property type="entry name" value="H71647"/>
</dbReference>
<dbReference type="RefSeq" id="NP_221204.1">
    <property type="nucleotide sequence ID" value="NC_000963.1"/>
</dbReference>
<dbReference type="RefSeq" id="WP_004599684.1">
    <property type="nucleotide sequence ID" value="NC_000963.1"/>
</dbReference>
<dbReference type="SMR" id="Q9ZCA4"/>
<dbReference type="STRING" id="272947.gene:17555925"/>
<dbReference type="EnsemblBacteria" id="CAA15280">
    <property type="protein sequence ID" value="CAA15280"/>
    <property type="gene ID" value="CAA15280"/>
</dbReference>
<dbReference type="GeneID" id="57569979"/>
<dbReference type="KEGG" id="rpr:RP856"/>
<dbReference type="PATRIC" id="fig|272947.5.peg.894"/>
<dbReference type="eggNOG" id="COG0013">
    <property type="taxonomic scope" value="Bacteria"/>
</dbReference>
<dbReference type="HOGENOM" id="CLU_004485_1_1_5"/>
<dbReference type="OrthoDB" id="9803884at2"/>
<dbReference type="Proteomes" id="UP000002480">
    <property type="component" value="Chromosome"/>
</dbReference>
<dbReference type="GO" id="GO:0005829">
    <property type="term" value="C:cytosol"/>
    <property type="evidence" value="ECO:0007669"/>
    <property type="project" value="TreeGrafter"/>
</dbReference>
<dbReference type="GO" id="GO:0004813">
    <property type="term" value="F:alanine-tRNA ligase activity"/>
    <property type="evidence" value="ECO:0007669"/>
    <property type="project" value="UniProtKB-UniRule"/>
</dbReference>
<dbReference type="GO" id="GO:0002161">
    <property type="term" value="F:aminoacyl-tRNA deacylase activity"/>
    <property type="evidence" value="ECO:0007669"/>
    <property type="project" value="TreeGrafter"/>
</dbReference>
<dbReference type="GO" id="GO:0005524">
    <property type="term" value="F:ATP binding"/>
    <property type="evidence" value="ECO:0007669"/>
    <property type="project" value="UniProtKB-UniRule"/>
</dbReference>
<dbReference type="GO" id="GO:0000049">
    <property type="term" value="F:tRNA binding"/>
    <property type="evidence" value="ECO:0007669"/>
    <property type="project" value="UniProtKB-KW"/>
</dbReference>
<dbReference type="GO" id="GO:0008270">
    <property type="term" value="F:zinc ion binding"/>
    <property type="evidence" value="ECO:0007669"/>
    <property type="project" value="UniProtKB-UniRule"/>
</dbReference>
<dbReference type="GO" id="GO:0006419">
    <property type="term" value="P:alanyl-tRNA aminoacylation"/>
    <property type="evidence" value="ECO:0007669"/>
    <property type="project" value="UniProtKB-UniRule"/>
</dbReference>
<dbReference type="GO" id="GO:0045892">
    <property type="term" value="P:negative regulation of DNA-templated transcription"/>
    <property type="evidence" value="ECO:0007669"/>
    <property type="project" value="TreeGrafter"/>
</dbReference>
<dbReference type="CDD" id="cd00673">
    <property type="entry name" value="AlaRS_core"/>
    <property type="match status" value="1"/>
</dbReference>
<dbReference type="FunFam" id="3.10.310.40:FF:000001">
    <property type="entry name" value="Alanine--tRNA ligase"/>
    <property type="match status" value="1"/>
</dbReference>
<dbReference type="FunFam" id="3.30.54.20:FF:000001">
    <property type="entry name" value="Alanine--tRNA ligase"/>
    <property type="match status" value="1"/>
</dbReference>
<dbReference type="FunFam" id="3.30.930.10:FF:000004">
    <property type="entry name" value="Alanine--tRNA ligase"/>
    <property type="match status" value="1"/>
</dbReference>
<dbReference type="FunFam" id="3.30.980.10:FF:000004">
    <property type="entry name" value="Alanine--tRNA ligase, cytoplasmic"/>
    <property type="match status" value="1"/>
</dbReference>
<dbReference type="Gene3D" id="2.40.30.130">
    <property type="match status" value="1"/>
</dbReference>
<dbReference type="Gene3D" id="3.10.310.40">
    <property type="match status" value="1"/>
</dbReference>
<dbReference type="Gene3D" id="3.30.54.20">
    <property type="match status" value="1"/>
</dbReference>
<dbReference type="Gene3D" id="3.30.930.10">
    <property type="entry name" value="Bira Bifunctional Protein, Domain 2"/>
    <property type="match status" value="1"/>
</dbReference>
<dbReference type="Gene3D" id="3.30.980.10">
    <property type="entry name" value="Threonyl-trna Synthetase, Chain A, domain 2"/>
    <property type="match status" value="1"/>
</dbReference>
<dbReference type="HAMAP" id="MF_00036_B">
    <property type="entry name" value="Ala_tRNA_synth_B"/>
    <property type="match status" value="1"/>
</dbReference>
<dbReference type="InterPro" id="IPR045864">
    <property type="entry name" value="aa-tRNA-synth_II/BPL/LPL"/>
</dbReference>
<dbReference type="InterPro" id="IPR002318">
    <property type="entry name" value="Ala-tRNA-lgiase_IIc"/>
</dbReference>
<dbReference type="InterPro" id="IPR018162">
    <property type="entry name" value="Ala-tRNA-ligase_IIc_anticod-bd"/>
</dbReference>
<dbReference type="InterPro" id="IPR018165">
    <property type="entry name" value="Ala-tRNA-synth_IIc_core"/>
</dbReference>
<dbReference type="InterPro" id="IPR018164">
    <property type="entry name" value="Ala-tRNA-synth_IIc_N"/>
</dbReference>
<dbReference type="InterPro" id="IPR050058">
    <property type="entry name" value="Ala-tRNA_ligase"/>
</dbReference>
<dbReference type="InterPro" id="IPR023033">
    <property type="entry name" value="Ala_tRNA_ligase_euk/bac"/>
</dbReference>
<dbReference type="InterPro" id="IPR003156">
    <property type="entry name" value="DHHA1_dom"/>
</dbReference>
<dbReference type="InterPro" id="IPR018163">
    <property type="entry name" value="Thr/Ala-tRNA-synth_IIc_edit"/>
</dbReference>
<dbReference type="InterPro" id="IPR009000">
    <property type="entry name" value="Transl_B-barrel_sf"/>
</dbReference>
<dbReference type="InterPro" id="IPR012947">
    <property type="entry name" value="tRNA_SAD"/>
</dbReference>
<dbReference type="NCBIfam" id="TIGR00344">
    <property type="entry name" value="alaS"/>
    <property type="match status" value="1"/>
</dbReference>
<dbReference type="PANTHER" id="PTHR11777:SF9">
    <property type="entry name" value="ALANINE--TRNA LIGASE, CYTOPLASMIC"/>
    <property type="match status" value="1"/>
</dbReference>
<dbReference type="PANTHER" id="PTHR11777">
    <property type="entry name" value="ALANYL-TRNA SYNTHETASE"/>
    <property type="match status" value="1"/>
</dbReference>
<dbReference type="Pfam" id="PF02272">
    <property type="entry name" value="DHHA1"/>
    <property type="match status" value="1"/>
</dbReference>
<dbReference type="Pfam" id="PF01411">
    <property type="entry name" value="tRNA-synt_2c"/>
    <property type="match status" value="1"/>
</dbReference>
<dbReference type="Pfam" id="PF07973">
    <property type="entry name" value="tRNA_SAD"/>
    <property type="match status" value="1"/>
</dbReference>
<dbReference type="PRINTS" id="PR00980">
    <property type="entry name" value="TRNASYNTHALA"/>
</dbReference>
<dbReference type="SMART" id="SM00863">
    <property type="entry name" value="tRNA_SAD"/>
    <property type="match status" value="1"/>
</dbReference>
<dbReference type="SUPFAM" id="SSF55681">
    <property type="entry name" value="Class II aaRS and biotin synthetases"/>
    <property type="match status" value="1"/>
</dbReference>
<dbReference type="SUPFAM" id="SSF101353">
    <property type="entry name" value="Putative anticodon-binding domain of alanyl-tRNA synthetase (AlaRS)"/>
    <property type="match status" value="1"/>
</dbReference>
<dbReference type="SUPFAM" id="SSF55186">
    <property type="entry name" value="ThrRS/AlaRS common domain"/>
    <property type="match status" value="1"/>
</dbReference>
<dbReference type="SUPFAM" id="SSF50447">
    <property type="entry name" value="Translation proteins"/>
    <property type="match status" value="1"/>
</dbReference>
<dbReference type="PROSITE" id="PS50860">
    <property type="entry name" value="AA_TRNA_LIGASE_II_ALA"/>
    <property type="match status" value="1"/>
</dbReference>
<reference key="1">
    <citation type="journal article" date="1998" name="Nature">
        <title>The genome sequence of Rickettsia prowazekii and the origin of mitochondria.</title>
        <authorList>
            <person name="Andersson S.G.E."/>
            <person name="Zomorodipour A."/>
            <person name="Andersson J.O."/>
            <person name="Sicheritz-Ponten T."/>
            <person name="Alsmark U.C.M."/>
            <person name="Podowski R.M."/>
            <person name="Naeslund A.K."/>
            <person name="Eriksson A.-S."/>
            <person name="Winkler H.H."/>
            <person name="Kurland C.G."/>
        </authorList>
    </citation>
    <scope>NUCLEOTIDE SEQUENCE [LARGE SCALE GENOMIC DNA]</scope>
    <source>
        <strain>Madrid E</strain>
    </source>
</reference>
<feature type="chain" id="PRO_0000075192" description="Alanine--tRNA ligase">
    <location>
        <begin position="1"/>
        <end position="877"/>
    </location>
</feature>
<feature type="binding site" evidence="1">
    <location>
        <position position="567"/>
    </location>
    <ligand>
        <name>Zn(2+)</name>
        <dbReference type="ChEBI" id="CHEBI:29105"/>
    </ligand>
</feature>
<feature type="binding site" evidence="1">
    <location>
        <position position="571"/>
    </location>
    <ligand>
        <name>Zn(2+)</name>
        <dbReference type="ChEBI" id="CHEBI:29105"/>
    </ligand>
</feature>
<feature type="binding site" evidence="1">
    <location>
        <position position="669"/>
    </location>
    <ligand>
        <name>Zn(2+)</name>
        <dbReference type="ChEBI" id="CHEBI:29105"/>
    </ligand>
</feature>
<feature type="binding site" evidence="1">
    <location>
        <position position="673"/>
    </location>
    <ligand>
        <name>Zn(2+)</name>
        <dbReference type="ChEBI" id="CHEBI:29105"/>
    </ligand>
</feature>